<gene>
    <name evidence="1" type="primary">citD</name>
    <name type="ordered locus">LCABL_20830</name>
</gene>
<evidence type="ECO:0000255" key="1">
    <source>
        <dbReference type="HAMAP-Rule" id="MF_00805"/>
    </source>
</evidence>
<name>CITD_LACCB</name>
<organism>
    <name type="scientific">Lacticaseibacillus casei (strain BL23)</name>
    <name type="common">Lactobacillus casei</name>
    <dbReference type="NCBI Taxonomy" id="543734"/>
    <lineage>
        <taxon>Bacteria</taxon>
        <taxon>Bacillati</taxon>
        <taxon>Bacillota</taxon>
        <taxon>Bacilli</taxon>
        <taxon>Lactobacillales</taxon>
        <taxon>Lactobacillaceae</taxon>
        <taxon>Lacticaseibacillus</taxon>
    </lineage>
</organism>
<proteinExistence type="inferred from homology"/>
<accession>B3W8Y1</accession>
<reference key="1">
    <citation type="submission" date="2008-06" db="EMBL/GenBank/DDBJ databases">
        <title>Lactobacillus casei BL23 complete genome sequence.</title>
        <authorList>
            <person name="Maze A."/>
            <person name="Boel G."/>
            <person name="Bourand A."/>
            <person name="Loux V."/>
            <person name="Gibrat J.F."/>
            <person name="Zuniga M."/>
            <person name="Hartke A."/>
            <person name="Deutscher J."/>
        </authorList>
    </citation>
    <scope>NUCLEOTIDE SEQUENCE [LARGE SCALE GENOMIC DNA]</scope>
    <source>
        <strain>BL23</strain>
    </source>
</reference>
<protein>
    <recommendedName>
        <fullName evidence="1">Citrate lyase acyl carrier protein</fullName>
    </recommendedName>
    <alternativeName>
        <fullName evidence="1">Citrate lyase gamma chain</fullName>
    </alternativeName>
</protein>
<sequence length="101" mass="10898">MEIKHPATAGTLESSDIQITLSPATSGVAIQLQSSVEKQFGHQIRSVIEATLAKLGIENVAVDANDKGALDCTIKARTIAAVYRASDNKTFDWEEINAWIN</sequence>
<comment type="function">
    <text evidence="1">Covalent carrier of the coenzyme of citrate lyase.</text>
</comment>
<comment type="subunit">
    <text evidence="1">Oligomer with a subunit composition of (alpha,beta,gamma)6.</text>
</comment>
<comment type="subcellular location">
    <subcellularLocation>
        <location evidence="1">Cytoplasm</location>
    </subcellularLocation>
</comment>
<comment type="similarity">
    <text evidence="1">Belongs to the CitD family.</text>
</comment>
<feature type="chain" id="PRO_1000133973" description="Citrate lyase acyl carrier protein">
    <location>
        <begin position="1"/>
        <end position="101"/>
    </location>
</feature>
<feature type="modified residue" description="O-(phosphoribosyl dephospho-coenzyme A)serine" evidence="1">
    <location>
        <position position="14"/>
    </location>
</feature>
<keyword id="KW-0963">Cytoplasm</keyword>
<keyword id="KW-0597">Phosphoprotein</keyword>
<dbReference type="EMBL" id="FM177140">
    <property type="protein sequence ID" value="CAQ67150.1"/>
    <property type="molecule type" value="Genomic_DNA"/>
</dbReference>
<dbReference type="SMR" id="B3W8Y1"/>
<dbReference type="KEGG" id="lcb:LCABL_20830"/>
<dbReference type="HOGENOM" id="CLU_158489_0_0_9"/>
<dbReference type="GO" id="GO:0005737">
    <property type="term" value="C:cytoplasm"/>
    <property type="evidence" value="ECO:0007669"/>
    <property type="project" value="UniProtKB-SubCell"/>
</dbReference>
<dbReference type="HAMAP" id="MF_00805">
    <property type="entry name" value="CitD"/>
    <property type="match status" value="1"/>
</dbReference>
<dbReference type="InterPro" id="IPR006495">
    <property type="entry name" value="CitD"/>
</dbReference>
<dbReference type="InterPro" id="IPR023439">
    <property type="entry name" value="Mal_deCO2ase/Cit_lyase_ACP"/>
</dbReference>
<dbReference type="NCBIfam" id="TIGR01608">
    <property type="entry name" value="citD"/>
    <property type="match status" value="1"/>
</dbReference>
<dbReference type="NCBIfam" id="NF009726">
    <property type="entry name" value="PRK13253.1"/>
    <property type="match status" value="1"/>
</dbReference>
<dbReference type="Pfam" id="PF06857">
    <property type="entry name" value="ACP"/>
    <property type="match status" value="1"/>
</dbReference>
<dbReference type="PIRSF" id="PIRSF002736">
    <property type="entry name" value="Citrt_lyas_gamma"/>
    <property type="match status" value="1"/>
</dbReference>